<feature type="chain" id="PRO_0000133680" description="Probable WRKY transcription factor 39">
    <location>
        <begin position="1"/>
        <end position="330"/>
    </location>
</feature>
<feature type="DNA-binding region" description="WRKY" evidence="2">
    <location>
        <begin position="256"/>
        <end position="322"/>
    </location>
</feature>
<gene>
    <name type="primary">WRKY39</name>
    <name type="ordered locus">At3g04670</name>
    <name type="ORF">F7O18.30</name>
</gene>
<keyword id="KW-0025">Alternative splicing</keyword>
<keyword id="KW-0238">DNA-binding</keyword>
<keyword id="KW-0539">Nucleus</keyword>
<keyword id="KW-1185">Reference proteome</keyword>
<keyword id="KW-0804">Transcription</keyword>
<keyword id="KW-0805">Transcription regulation</keyword>
<sequence>MEEVEAANRSAIESCHGVLNLLSQRTSDPKSLTVETGEVVSKFKRVASLLTRGLGHGKFRSTNKFRSSFPQHIFLESPICCGNDLSGDYTQVLAPEPLQMVPASAVYNEMEPKHQLGHPSLMLSHKMCVDKSFLELKPPPFRAPYQLIHNHQQIAYSRSNSGVNLKFDGSGSSCYTPSVSNGSRSFVSSLSMDASVTDYDRNSFHLTGLSRGSDQQHTRKMCSGSLKCGSRSKCHCSKKRKLRVKRSIKVPAISNKIADIPPDEYSWRKYGQKPIKGSPHPRGYYKCSSVRGCPARKHVERCIDETSMLIVTYEGEHNHSRILSSQSAHT</sequence>
<accession>Q9SR07</accession>
<dbReference type="EMBL" id="AF404860">
    <property type="protein sequence ID" value="AAK96198.1"/>
    <property type="molecule type" value="mRNA"/>
</dbReference>
<dbReference type="EMBL" id="AC011437">
    <property type="protein sequence ID" value="AAF04913.1"/>
    <property type="molecule type" value="Genomic_DNA"/>
</dbReference>
<dbReference type="EMBL" id="CP002686">
    <property type="protein sequence ID" value="AEE74116.1"/>
    <property type="molecule type" value="Genomic_DNA"/>
</dbReference>
<dbReference type="EMBL" id="AY053420">
    <property type="protein sequence ID" value="AAK96650.1"/>
    <property type="molecule type" value="mRNA"/>
</dbReference>
<dbReference type="EMBL" id="AY133586">
    <property type="protein sequence ID" value="AAM91416.1"/>
    <property type="molecule type" value="mRNA"/>
</dbReference>
<dbReference type="RefSeq" id="NP_566236.1">
    <molecule id="Q9SR07-1"/>
    <property type="nucleotide sequence ID" value="NM_111339.3"/>
</dbReference>
<dbReference type="SMR" id="Q9SR07"/>
<dbReference type="BioGRID" id="4960">
    <property type="interactions" value="5"/>
</dbReference>
<dbReference type="FunCoup" id="Q9SR07">
    <property type="interactions" value="140"/>
</dbReference>
<dbReference type="IntAct" id="Q9SR07">
    <property type="interactions" value="3"/>
</dbReference>
<dbReference type="MINT" id="Q9SR07"/>
<dbReference type="STRING" id="3702.Q9SR07"/>
<dbReference type="iPTMnet" id="Q9SR07"/>
<dbReference type="PaxDb" id="3702-AT3G04670.1"/>
<dbReference type="ProteomicsDB" id="246477">
    <molecule id="Q9SR07-1"/>
</dbReference>
<dbReference type="EnsemblPlants" id="AT3G04670.1">
    <molecule id="Q9SR07-1"/>
    <property type="protein sequence ID" value="AT3G04670.1"/>
    <property type="gene ID" value="AT3G04670"/>
</dbReference>
<dbReference type="GeneID" id="819625"/>
<dbReference type="Gramene" id="AT3G04670.1">
    <molecule id="Q9SR07-1"/>
    <property type="protein sequence ID" value="AT3G04670.1"/>
    <property type="gene ID" value="AT3G04670"/>
</dbReference>
<dbReference type="KEGG" id="ath:AT3G04670"/>
<dbReference type="Araport" id="AT3G04670"/>
<dbReference type="TAIR" id="AT3G04670">
    <property type="gene designation" value="WRKY39"/>
</dbReference>
<dbReference type="eggNOG" id="ENOG502QPQX">
    <property type="taxonomic scope" value="Eukaryota"/>
</dbReference>
<dbReference type="HOGENOM" id="CLU_040478_0_0_1"/>
<dbReference type="InParanoid" id="Q9SR07"/>
<dbReference type="OrthoDB" id="1918969at2759"/>
<dbReference type="PhylomeDB" id="Q9SR07"/>
<dbReference type="PRO" id="PR:Q9SR07"/>
<dbReference type="Proteomes" id="UP000006548">
    <property type="component" value="Chromosome 3"/>
</dbReference>
<dbReference type="ExpressionAtlas" id="Q9SR07">
    <property type="expression patterns" value="baseline and differential"/>
</dbReference>
<dbReference type="GO" id="GO:0005634">
    <property type="term" value="C:nucleus"/>
    <property type="evidence" value="ECO:0000305"/>
    <property type="project" value="TAIR"/>
</dbReference>
<dbReference type="GO" id="GO:0005516">
    <property type="term" value="F:calmodulin binding"/>
    <property type="evidence" value="ECO:0000314"/>
    <property type="project" value="TAIR"/>
</dbReference>
<dbReference type="GO" id="GO:0003700">
    <property type="term" value="F:DNA-binding transcription factor activity"/>
    <property type="evidence" value="ECO:0000250"/>
    <property type="project" value="TAIR"/>
</dbReference>
<dbReference type="GO" id="GO:0043565">
    <property type="term" value="F:sequence-specific DNA binding"/>
    <property type="evidence" value="ECO:0007669"/>
    <property type="project" value="InterPro"/>
</dbReference>
<dbReference type="FunFam" id="2.20.25.80:FF:000004">
    <property type="entry name" value="WRKY transcription factor 65"/>
    <property type="match status" value="1"/>
</dbReference>
<dbReference type="Gene3D" id="2.20.25.80">
    <property type="entry name" value="WRKY domain"/>
    <property type="match status" value="1"/>
</dbReference>
<dbReference type="InterPro" id="IPR003657">
    <property type="entry name" value="WRKY_dom"/>
</dbReference>
<dbReference type="InterPro" id="IPR036576">
    <property type="entry name" value="WRKY_dom_sf"/>
</dbReference>
<dbReference type="InterPro" id="IPR044810">
    <property type="entry name" value="WRKY_plant"/>
</dbReference>
<dbReference type="InterPro" id="IPR018872">
    <property type="entry name" value="Zn-cluster-dom"/>
</dbReference>
<dbReference type="PANTHER" id="PTHR31282">
    <property type="entry name" value="WRKY TRANSCRIPTION FACTOR 21-RELATED"/>
    <property type="match status" value="1"/>
</dbReference>
<dbReference type="Pfam" id="PF10533">
    <property type="entry name" value="Plant_zn_clust"/>
    <property type="match status" value="1"/>
</dbReference>
<dbReference type="Pfam" id="PF03106">
    <property type="entry name" value="WRKY"/>
    <property type="match status" value="1"/>
</dbReference>
<dbReference type="SMART" id="SM00774">
    <property type="entry name" value="WRKY"/>
    <property type="match status" value="1"/>
</dbReference>
<dbReference type="SUPFAM" id="SSF118290">
    <property type="entry name" value="WRKY DNA-binding domain"/>
    <property type="match status" value="1"/>
</dbReference>
<dbReference type="PROSITE" id="PS50811">
    <property type="entry name" value="WRKY"/>
    <property type="match status" value="1"/>
</dbReference>
<protein>
    <recommendedName>
        <fullName>Probable WRKY transcription factor 39</fullName>
    </recommendedName>
    <alternativeName>
        <fullName>WRKY DNA-binding protein 39</fullName>
    </alternativeName>
</protein>
<comment type="function">
    <text evidence="1">Transcription factor. Interacts specifically with the W box (5'-(T)TGAC[CT]-3'), a frequently occurring elicitor-responsive cis-acting element (By similarity).</text>
</comment>
<comment type="subcellular location">
    <subcellularLocation>
        <location evidence="2">Nucleus</location>
    </subcellularLocation>
</comment>
<comment type="alternative products">
    <event type="alternative splicing"/>
    <isoform>
        <id>Q9SR07-1</id>
        <name>1</name>
        <sequence type="displayed"/>
    </isoform>
    <text>A number of isoforms are produced. According to EST sequences.</text>
</comment>
<name>WRK39_ARATH</name>
<proteinExistence type="evidence at transcript level"/>
<evidence type="ECO:0000250" key="1"/>
<evidence type="ECO:0000255" key="2">
    <source>
        <dbReference type="PROSITE-ProRule" id="PRU00223"/>
    </source>
</evidence>
<reference key="1">
    <citation type="submission" date="2001-08" db="EMBL/GenBank/DDBJ databases">
        <title>Arabidopsis thaliana transcription factor WRKY39.</title>
        <authorList>
            <person name="Ulker B."/>
            <person name="Kushnir S."/>
            <person name="Somssich I.E."/>
        </authorList>
    </citation>
    <scope>NUCLEOTIDE SEQUENCE [MRNA]</scope>
    <source>
        <strain>cv. Columbia</strain>
        <tissue>Flower</tissue>
    </source>
</reference>
<reference key="2">
    <citation type="journal article" date="2000" name="Nature">
        <title>Sequence and analysis of chromosome 3 of the plant Arabidopsis thaliana.</title>
        <authorList>
            <person name="Salanoubat M."/>
            <person name="Lemcke K."/>
            <person name="Rieger M."/>
            <person name="Ansorge W."/>
            <person name="Unseld M."/>
            <person name="Fartmann B."/>
            <person name="Valle G."/>
            <person name="Bloecker H."/>
            <person name="Perez-Alonso M."/>
            <person name="Obermaier B."/>
            <person name="Delseny M."/>
            <person name="Boutry M."/>
            <person name="Grivell L.A."/>
            <person name="Mache R."/>
            <person name="Puigdomenech P."/>
            <person name="De Simone V."/>
            <person name="Choisne N."/>
            <person name="Artiguenave F."/>
            <person name="Robert C."/>
            <person name="Brottier P."/>
            <person name="Wincker P."/>
            <person name="Cattolico L."/>
            <person name="Weissenbach J."/>
            <person name="Saurin W."/>
            <person name="Quetier F."/>
            <person name="Schaefer M."/>
            <person name="Mueller-Auer S."/>
            <person name="Gabel C."/>
            <person name="Fuchs M."/>
            <person name="Benes V."/>
            <person name="Wurmbach E."/>
            <person name="Drzonek H."/>
            <person name="Erfle H."/>
            <person name="Jordan N."/>
            <person name="Bangert S."/>
            <person name="Wiedelmann R."/>
            <person name="Kranz H."/>
            <person name="Voss H."/>
            <person name="Holland R."/>
            <person name="Brandt P."/>
            <person name="Nyakatura G."/>
            <person name="Vezzi A."/>
            <person name="D'Angelo M."/>
            <person name="Pallavicini A."/>
            <person name="Toppo S."/>
            <person name="Simionati B."/>
            <person name="Conrad A."/>
            <person name="Hornischer K."/>
            <person name="Kauer G."/>
            <person name="Loehnert T.-H."/>
            <person name="Nordsiek G."/>
            <person name="Reichelt J."/>
            <person name="Scharfe M."/>
            <person name="Schoen O."/>
            <person name="Bargues M."/>
            <person name="Terol J."/>
            <person name="Climent J."/>
            <person name="Navarro P."/>
            <person name="Collado C."/>
            <person name="Perez-Perez A."/>
            <person name="Ottenwaelder B."/>
            <person name="Duchemin D."/>
            <person name="Cooke R."/>
            <person name="Laudie M."/>
            <person name="Berger-Llauro C."/>
            <person name="Purnelle B."/>
            <person name="Masuy D."/>
            <person name="de Haan M."/>
            <person name="Maarse A.C."/>
            <person name="Alcaraz J.-P."/>
            <person name="Cottet A."/>
            <person name="Casacuberta E."/>
            <person name="Monfort A."/>
            <person name="Argiriou A."/>
            <person name="Flores M."/>
            <person name="Liguori R."/>
            <person name="Vitale D."/>
            <person name="Mannhaupt G."/>
            <person name="Haase D."/>
            <person name="Schoof H."/>
            <person name="Rudd S."/>
            <person name="Zaccaria P."/>
            <person name="Mewes H.-W."/>
            <person name="Mayer K.F.X."/>
            <person name="Kaul S."/>
            <person name="Town C.D."/>
            <person name="Koo H.L."/>
            <person name="Tallon L.J."/>
            <person name="Jenkins J."/>
            <person name="Rooney T."/>
            <person name="Rizzo M."/>
            <person name="Walts A."/>
            <person name="Utterback T."/>
            <person name="Fujii C.Y."/>
            <person name="Shea T.P."/>
            <person name="Creasy T.H."/>
            <person name="Haas B."/>
            <person name="Maiti R."/>
            <person name="Wu D."/>
            <person name="Peterson J."/>
            <person name="Van Aken S."/>
            <person name="Pai G."/>
            <person name="Militscher J."/>
            <person name="Sellers P."/>
            <person name="Gill J.E."/>
            <person name="Feldblyum T.V."/>
            <person name="Preuss D."/>
            <person name="Lin X."/>
            <person name="Nierman W.C."/>
            <person name="Salzberg S.L."/>
            <person name="White O."/>
            <person name="Venter J.C."/>
            <person name="Fraser C.M."/>
            <person name="Kaneko T."/>
            <person name="Nakamura Y."/>
            <person name="Sato S."/>
            <person name="Kato T."/>
            <person name="Asamizu E."/>
            <person name="Sasamoto S."/>
            <person name="Kimura T."/>
            <person name="Idesawa K."/>
            <person name="Kawashima K."/>
            <person name="Kishida Y."/>
            <person name="Kiyokawa C."/>
            <person name="Kohara M."/>
            <person name="Matsumoto M."/>
            <person name="Matsuno A."/>
            <person name="Muraki A."/>
            <person name="Nakayama S."/>
            <person name="Nakazaki N."/>
            <person name="Shinpo S."/>
            <person name="Takeuchi C."/>
            <person name="Wada T."/>
            <person name="Watanabe A."/>
            <person name="Yamada M."/>
            <person name="Yasuda M."/>
            <person name="Tabata S."/>
        </authorList>
    </citation>
    <scope>NUCLEOTIDE SEQUENCE [LARGE SCALE GENOMIC DNA]</scope>
    <source>
        <strain>cv. Columbia</strain>
    </source>
</reference>
<reference key="3">
    <citation type="journal article" date="2017" name="Plant J.">
        <title>Araport11: a complete reannotation of the Arabidopsis thaliana reference genome.</title>
        <authorList>
            <person name="Cheng C.Y."/>
            <person name="Krishnakumar V."/>
            <person name="Chan A.P."/>
            <person name="Thibaud-Nissen F."/>
            <person name="Schobel S."/>
            <person name="Town C.D."/>
        </authorList>
    </citation>
    <scope>GENOME REANNOTATION</scope>
    <source>
        <strain>cv. Columbia</strain>
    </source>
</reference>
<reference key="4">
    <citation type="journal article" date="2003" name="Science">
        <title>Empirical analysis of transcriptional activity in the Arabidopsis genome.</title>
        <authorList>
            <person name="Yamada K."/>
            <person name="Lim J."/>
            <person name="Dale J.M."/>
            <person name="Chen H."/>
            <person name="Shinn P."/>
            <person name="Palm C.J."/>
            <person name="Southwick A.M."/>
            <person name="Wu H.C."/>
            <person name="Kim C.J."/>
            <person name="Nguyen M."/>
            <person name="Pham P.K."/>
            <person name="Cheuk R.F."/>
            <person name="Karlin-Newmann G."/>
            <person name="Liu S.X."/>
            <person name="Lam B."/>
            <person name="Sakano H."/>
            <person name="Wu T."/>
            <person name="Yu G."/>
            <person name="Miranda M."/>
            <person name="Quach H.L."/>
            <person name="Tripp M."/>
            <person name="Chang C.H."/>
            <person name="Lee J.M."/>
            <person name="Toriumi M.J."/>
            <person name="Chan M.M."/>
            <person name="Tang C.C."/>
            <person name="Onodera C.S."/>
            <person name="Deng J.M."/>
            <person name="Akiyama K."/>
            <person name="Ansari Y."/>
            <person name="Arakawa T."/>
            <person name="Banh J."/>
            <person name="Banno F."/>
            <person name="Bowser L."/>
            <person name="Brooks S.Y."/>
            <person name="Carninci P."/>
            <person name="Chao Q."/>
            <person name="Choy N."/>
            <person name="Enju A."/>
            <person name="Goldsmith A.D."/>
            <person name="Gurjal M."/>
            <person name="Hansen N.F."/>
            <person name="Hayashizaki Y."/>
            <person name="Johnson-Hopson C."/>
            <person name="Hsuan V.W."/>
            <person name="Iida K."/>
            <person name="Karnes M."/>
            <person name="Khan S."/>
            <person name="Koesema E."/>
            <person name="Ishida J."/>
            <person name="Jiang P.X."/>
            <person name="Jones T."/>
            <person name="Kawai J."/>
            <person name="Kamiya A."/>
            <person name="Meyers C."/>
            <person name="Nakajima M."/>
            <person name="Narusaka M."/>
            <person name="Seki M."/>
            <person name="Sakurai T."/>
            <person name="Satou M."/>
            <person name="Tamse R."/>
            <person name="Vaysberg M."/>
            <person name="Wallender E.K."/>
            <person name="Wong C."/>
            <person name="Yamamura Y."/>
            <person name="Yuan S."/>
            <person name="Shinozaki K."/>
            <person name="Davis R.W."/>
            <person name="Theologis A."/>
            <person name="Ecker J.R."/>
        </authorList>
    </citation>
    <scope>NUCLEOTIDE SEQUENCE [LARGE SCALE MRNA]</scope>
    <source>
        <strain>cv. Columbia</strain>
    </source>
</reference>
<organism>
    <name type="scientific">Arabidopsis thaliana</name>
    <name type="common">Mouse-ear cress</name>
    <dbReference type="NCBI Taxonomy" id="3702"/>
    <lineage>
        <taxon>Eukaryota</taxon>
        <taxon>Viridiplantae</taxon>
        <taxon>Streptophyta</taxon>
        <taxon>Embryophyta</taxon>
        <taxon>Tracheophyta</taxon>
        <taxon>Spermatophyta</taxon>
        <taxon>Magnoliopsida</taxon>
        <taxon>eudicotyledons</taxon>
        <taxon>Gunneridae</taxon>
        <taxon>Pentapetalae</taxon>
        <taxon>rosids</taxon>
        <taxon>malvids</taxon>
        <taxon>Brassicales</taxon>
        <taxon>Brassicaceae</taxon>
        <taxon>Camelineae</taxon>
        <taxon>Arabidopsis</taxon>
    </lineage>
</organism>